<dbReference type="EMBL" id="X67119">
    <property type="protein sequence ID" value="CAA47584.1"/>
    <property type="molecule type" value="Genomic_DNA"/>
</dbReference>
<dbReference type="EMBL" id="S55844">
    <property type="protein sequence ID" value="AAB24681.1"/>
    <property type="molecule type" value="Genomic_DNA"/>
</dbReference>
<dbReference type="EMBL" id="X69198">
    <property type="protein sequence ID" value="CAA49026.1"/>
    <property type="molecule type" value="Genomic_DNA"/>
</dbReference>
<dbReference type="PIR" id="A36846">
    <property type="entry name" value="A36846"/>
</dbReference>
<dbReference type="RefSeq" id="NP_042129.1">
    <property type="nucleotide sequence ID" value="NC_001611.1"/>
</dbReference>
<dbReference type="SMR" id="P0DSY9"/>
<dbReference type="GeneID" id="1486440"/>
<dbReference type="KEGG" id="vg:1486440"/>
<dbReference type="Proteomes" id="UP000002060">
    <property type="component" value="Segment"/>
</dbReference>
<dbReference type="GO" id="GO:0044167">
    <property type="term" value="C:host cell endoplasmic reticulum membrane"/>
    <property type="evidence" value="ECO:0007669"/>
    <property type="project" value="UniProtKB-SubCell"/>
</dbReference>
<dbReference type="GO" id="GO:0016020">
    <property type="term" value="C:membrane"/>
    <property type="evidence" value="ECO:0007669"/>
    <property type="project" value="UniProtKB-KW"/>
</dbReference>
<dbReference type="GO" id="GO:0019031">
    <property type="term" value="C:viral envelope"/>
    <property type="evidence" value="ECO:0007669"/>
    <property type="project" value="UniProtKB-KW"/>
</dbReference>
<dbReference type="GO" id="GO:0055036">
    <property type="term" value="C:virion membrane"/>
    <property type="evidence" value="ECO:0007669"/>
    <property type="project" value="UniProtKB-SubCell"/>
</dbReference>
<dbReference type="GO" id="GO:0019064">
    <property type="term" value="P:fusion of virus membrane with host plasma membrane"/>
    <property type="evidence" value="ECO:0007669"/>
    <property type="project" value="UniProtKB-KW"/>
</dbReference>
<dbReference type="GO" id="GO:0046718">
    <property type="term" value="P:symbiont entry into host cell"/>
    <property type="evidence" value="ECO:0007669"/>
    <property type="project" value="UniProtKB-KW"/>
</dbReference>
<dbReference type="InterPro" id="IPR005023">
    <property type="entry name" value="Pox_LP_H2"/>
</dbReference>
<dbReference type="Pfam" id="PF03356">
    <property type="entry name" value="Pox_LP_H2"/>
    <property type="match status" value="1"/>
</dbReference>
<proteinExistence type="inferred from homology"/>
<name>PG107_VAR67</name>
<organism>
    <name type="scientific">Variola virus (isolate Human/India/Ind3/1967)</name>
    <name type="common">VARV</name>
    <name type="synonym">Smallpox virus</name>
    <dbReference type="NCBI Taxonomy" id="587200"/>
    <lineage>
        <taxon>Viruses</taxon>
        <taxon>Varidnaviria</taxon>
        <taxon>Bamfordvirae</taxon>
        <taxon>Nucleocytoviricota</taxon>
        <taxon>Pokkesviricetes</taxon>
        <taxon>Chitovirales</taxon>
        <taxon>Poxviridae</taxon>
        <taxon>Chordopoxvirinae</taxon>
        <taxon>Orthopoxvirus</taxon>
        <taxon>Variola virus</taxon>
    </lineage>
</organism>
<sequence length="189" mass="21509">MDKTTLSVNACNLEYVREKAIVGVQAAKTSTLIFFVIILAISALLLWFQTSDNPVFNELTRYMRIKNTVNDWKSLTDSKTKLESDRGRLLAAGKDDIFEFKCVDFGAYFIAMRLDKKTYLPQAIRRGTGDAWMVKKAAKVDPSAQQFCQYLIKHKSNNVITCGNEMLNELGYSGYFMSPHWCSDLSNME</sequence>
<gene>
    <name type="primary">OPG107</name>
    <name type="ORF">H2R</name>
    <name type="ORF">I2R</name>
</gene>
<feature type="chain" id="PRO_0000099549" description="Late protein H2">
    <location>
        <begin position="1"/>
        <end position="189"/>
    </location>
</feature>
<feature type="topological domain" description="Intravirion" evidence="3">
    <location>
        <begin position="1"/>
        <end position="28"/>
    </location>
</feature>
<feature type="transmembrane region" description="Helical; Signal-anchor for type III membrane protein" evidence="3">
    <location>
        <begin position="29"/>
        <end position="49"/>
    </location>
</feature>
<feature type="topological domain" description="Virion surface" evidence="3">
    <location>
        <begin position="50"/>
        <end position="189"/>
    </location>
</feature>
<reference key="1">
    <citation type="journal article" date="1993" name="Virus Res.">
        <title>Nucleotide sequence analysis of variola virus HindIII M, L, I genome fragments.</title>
        <authorList>
            <person name="Shchelkunov S.N."/>
            <person name="Blinov V.M."/>
            <person name="Totmenin A.V."/>
            <person name="Marennikova S.S."/>
            <person name="Kolykhalov A.A."/>
            <person name="Frolov I.V."/>
            <person name="Chizhikov V.E."/>
            <person name="Gytorov V.V."/>
            <person name="Gashikov P.V."/>
            <person name="Belanov E.F."/>
            <person name="Belavin P.A."/>
            <person name="Resenchuk S.M."/>
            <person name="Andzhaparidze O.G."/>
            <person name="Sandakhchiev L.S."/>
        </authorList>
    </citation>
    <scope>NUCLEOTIDE SEQUENCE [GENOMIC DNA]</scope>
</reference>
<reference key="2">
    <citation type="journal article" date="1993" name="FEBS Lett.">
        <title>Genes of variola and vaccinia viruses necessary to overcome the host protective mechanisms.</title>
        <authorList>
            <person name="Shchelkunov S.N."/>
            <person name="Blinov V.M."/>
            <person name="Sandakhchiev L.S."/>
        </authorList>
    </citation>
    <scope>NUCLEOTIDE SEQUENCE [GENOMIC DNA]</scope>
</reference>
<keyword id="KW-1015">Disulfide bond</keyword>
<keyword id="KW-1169">Fusion of virus membrane with host cell membrane</keyword>
<keyword id="KW-1168">Fusion of virus membrane with host membrane</keyword>
<keyword id="KW-1038">Host endoplasmic reticulum</keyword>
<keyword id="KW-1043">Host membrane</keyword>
<keyword id="KW-0426">Late protein</keyword>
<keyword id="KW-0472">Membrane</keyword>
<keyword id="KW-1185">Reference proteome</keyword>
<keyword id="KW-0735">Signal-anchor</keyword>
<keyword id="KW-0812">Transmembrane</keyword>
<keyword id="KW-1133">Transmembrane helix</keyword>
<keyword id="KW-0261">Viral envelope protein</keyword>
<keyword id="KW-1162">Viral penetration into host cytoplasm</keyword>
<keyword id="KW-0946">Virion</keyword>
<keyword id="KW-1160">Virus entry into host cell</keyword>
<comment type="function">
    <text evidence="2">Envelope protein part of the entry-fusion complex responsible for the virus membrane fusion with host cell membrane during virus entry. Also plays a role in cell-cell fusion (syncytium formation).</text>
</comment>
<comment type="subunit">
    <text evidence="2">Part of a stable entry-fusion complex (EFC) which is at least composed of proteins OPG143, OPG147, OPG155, OPG86, OPG94, OPG107, OPG104, and OPG099. Formation of the viral membrane is necessary for the assembly of the complex.</text>
</comment>
<comment type="subcellular location">
    <subcellularLocation>
        <location evidence="2">Virion membrane</location>
        <topology evidence="2">Single-pass type III membrane protein</topology>
    </subcellularLocation>
    <subcellularLocation>
        <location evidence="2">Host endoplasmic reticulum membrane</location>
    </subcellularLocation>
    <text evidence="1">Component of the mature virion (MV) membrane (By similarity). The mature virion is located in the cytoplasm of infected cells and is probably released by cell lysis.</text>
</comment>
<comment type="PTM">
    <text evidence="2">Contains two intramolecular disulfide bonds. They are created by the viral disulfide bond formation pathway, a poxvirus-specific pathway that operates on the cytoplasmic side of the MV membranes.</text>
</comment>
<comment type="similarity">
    <text evidence="4">Belongs to the orthopoxvirus OPG107 family.</text>
</comment>
<organismHost>
    <name type="scientific">Homo sapiens</name>
    <name type="common">Human</name>
    <dbReference type="NCBI Taxonomy" id="9606"/>
</organismHost>
<accession>P0DSY9</accession>
<accession>P33061</accession>
<evidence type="ECO:0000250" key="1"/>
<evidence type="ECO:0000250" key="2">
    <source>
        <dbReference type="UniProtKB" id="P08583"/>
    </source>
</evidence>
<evidence type="ECO:0000255" key="3"/>
<evidence type="ECO:0000305" key="4"/>
<protein>
    <recommendedName>
        <fullName>Late protein H2</fullName>
    </recommendedName>
</protein>